<comment type="function">
    <text evidence="1">Calcium-regulated non-lysosomal thiol-protease.</text>
</comment>
<comment type="similarity">
    <text evidence="4">Belongs to the peptidase C2 family.</text>
</comment>
<feature type="chain" id="PRO_0000207715" description="Calpain-5">
    <location>
        <begin position="1"/>
        <end position="640"/>
    </location>
</feature>
<feature type="domain" description="Calpain catalytic" evidence="3">
    <location>
        <begin position="26"/>
        <end position="343"/>
    </location>
</feature>
<feature type="domain" description="C2" evidence="2">
    <location>
        <begin position="499"/>
        <end position="617"/>
    </location>
</feature>
<feature type="region of interest" description="Domain III">
    <location>
        <begin position="344"/>
        <end position="496"/>
    </location>
</feature>
<feature type="active site" evidence="1">
    <location>
        <position position="81"/>
    </location>
</feature>
<feature type="active site" evidence="1">
    <location>
        <position position="252"/>
    </location>
</feature>
<feature type="active site" evidence="1">
    <location>
        <position position="284"/>
    </location>
</feature>
<proteinExistence type="evidence at protein level"/>
<name>CAN5_RAT</name>
<dbReference type="EC" id="3.4.22.-"/>
<dbReference type="EMBL" id="AF484958">
    <property type="protein sequence ID" value="AAL92024.1"/>
    <property type="molecule type" value="mRNA"/>
</dbReference>
<dbReference type="SMR" id="Q8R4C0"/>
<dbReference type="FunCoup" id="Q8R4C0">
    <property type="interactions" value="389"/>
</dbReference>
<dbReference type="STRING" id="10116.ENSRNOP00000019370"/>
<dbReference type="MEROPS" id="C02.011"/>
<dbReference type="GlyGen" id="Q8R4C0">
    <property type="glycosylation" value="1 site"/>
</dbReference>
<dbReference type="PhosphoSitePlus" id="Q8R4C0"/>
<dbReference type="SwissPalm" id="Q8R4C0"/>
<dbReference type="jPOST" id="Q8R4C0"/>
<dbReference type="PaxDb" id="10116-ENSRNOP00000019370"/>
<dbReference type="AGR" id="RGD:620084"/>
<dbReference type="RGD" id="620084">
    <property type="gene designation" value="Capn5"/>
</dbReference>
<dbReference type="eggNOG" id="KOG0045">
    <property type="taxonomic scope" value="Eukaryota"/>
</dbReference>
<dbReference type="InParanoid" id="Q8R4C0"/>
<dbReference type="PhylomeDB" id="Q8R4C0"/>
<dbReference type="BRENDA" id="3.4.22.B25">
    <property type="organism ID" value="5301"/>
</dbReference>
<dbReference type="Reactome" id="R-RNO-1474228">
    <property type="pathway name" value="Degradation of the extracellular matrix"/>
</dbReference>
<dbReference type="PRO" id="PR:Q8R4C0"/>
<dbReference type="Proteomes" id="UP000002494">
    <property type="component" value="Unplaced"/>
</dbReference>
<dbReference type="GO" id="GO:0009986">
    <property type="term" value="C:cell surface"/>
    <property type="evidence" value="ECO:0000250"/>
    <property type="project" value="UniProtKB"/>
</dbReference>
<dbReference type="GO" id="GO:0005737">
    <property type="term" value="C:cytoplasm"/>
    <property type="evidence" value="ECO:0000318"/>
    <property type="project" value="GO_Central"/>
</dbReference>
<dbReference type="GO" id="GO:0045202">
    <property type="term" value="C:synapse"/>
    <property type="evidence" value="ECO:0000266"/>
    <property type="project" value="RGD"/>
</dbReference>
<dbReference type="GO" id="GO:0004198">
    <property type="term" value="F:calcium-dependent cysteine-type endopeptidase activity"/>
    <property type="evidence" value="ECO:0000318"/>
    <property type="project" value="GO_Central"/>
</dbReference>
<dbReference type="GO" id="GO:0060014">
    <property type="term" value="P:granulosa cell differentiation"/>
    <property type="evidence" value="ECO:0000270"/>
    <property type="project" value="RGD"/>
</dbReference>
<dbReference type="GO" id="GO:0001553">
    <property type="term" value="P:luteinization"/>
    <property type="evidence" value="ECO:0000270"/>
    <property type="project" value="RGD"/>
</dbReference>
<dbReference type="GO" id="GO:0001541">
    <property type="term" value="P:ovarian follicle development"/>
    <property type="evidence" value="ECO:0000270"/>
    <property type="project" value="RGD"/>
</dbReference>
<dbReference type="GO" id="GO:0006508">
    <property type="term" value="P:proteolysis"/>
    <property type="evidence" value="ECO:0000318"/>
    <property type="project" value="GO_Central"/>
</dbReference>
<dbReference type="CDD" id="cd04046">
    <property type="entry name" value="C2_Calpain"/>
    <property type="match status" value="1"/>
</dbReference>
<dbReference type="CDD" id="cd00214">
    <property type="entry name" value="Calpain_III"/>
    <property type="match status" value="1"/>
</dbReference>
<dbReference type="CDD" id="cd00044">
    <property type="entry name" value="CysPc"/>
    <property type="match status" value="1"/>
</dbReference>
<dbReference type="FunFam" id="2.60.120.380:FF:000003">
    <property type="entry name" value="Calpain 5"/>
    <property type="match status" value="1"/>
</dbReference>
<dbReference type="FunFam" id="2.60.40.150:FF:000136">
    <property type="entry name" value="Calpain 5"/>
    <property type="match status" value="1"/>
</dbReference>
<dbReference type="FunFam" id="3.90.70.10:FF:000027">
    <property type="entry name" value="Calpain 5"/>
    <property type="match status" value="1"/>
</dbReference>
<dbReference type="Gene3D" id="2.60.120.380">
    <property type="match status" value="1"/>
</dbReference>
<dbReference type="Gene3D" id="2.60.40.150">
    <property type="entry name" value="C2 domain"/>
    <property type="match status" value="1"/>
</dbReference>
<dbReference type="Gene3D" id="3.90.70.10">
    <property type="entry name" value="Cysteine proteinases"/>
    <property type="match status" value="1"/>
</dbReference>
<dbReference type="InterPro" id="IPR033884">
    <property type="entry name" value="C2_Calpain"/>
</dbReference>
<dbReference type="InterPro" id="IPR000008">
    <property type="entry name" value="C2_dom"/>
</dbReference>
<dbReference type="InterPro" id="IPR035892">
    <property type="entry name" value="C2_domain_sf"/>
</dbReference>
<dbReference type="InterPro" id="IPR033883">
    <property type="entry name" value="C2_III"/>
</dbReference>
<dbReference type="InterPro" id="IPR022684">
    <property type="entry name" value="Calpain_cysteine_protease"/>
</dbReference>
<dbReference type="InterPro" id="IPR022682">
    <property type="entry name" value="Calpain_domain_III"/>
</dbReference>
<dbReference type="InterPro" id="IPR022683">
    <property type="entry name" value="Calpain_III"/>
</dbReference>
<dbReference type="InterPro" id="IPR036213">
    <property type="entry name" value="Calpain_III_sf"/>
</dbReference>
<dbReference type="InterPro" id="IPR038765">
    <property type="entry name" value="Papain-like_cys_pep_sf"/>
</dbReference>
<dbReference type="InterPro" id="IPR000169">
    <property type="entry name" value="Pept_cys_AS"/>
</dbReference>
<dbReference type="InterPro" id="IPR001300">
    <property type="entry name" value="Peptidase_C2_calpain_cat"/>
</dbReference>
<dbReference type="PANTHER" id="PTHR10183">
    <property type="entry name" value="CALPAIN"/>
    <property type="match status" value="1"/>
</dbReference>
<dbReference type="PANTHER" id="PTHR10183:SF402">
    <property type="entry name" value="CALPAIN-5"/>
    <property type="match status" value="1"/>
</dbReference>
<dbReference type="Pfam" id="PF00168">
    <property type="entry name" value="C2"/>
    <property type="match status" value="1"/>
</dbReference>
<dbReference type="Pfam" id="PF01067">
    <property type="entry name" value="Calpain_III"/>
    <property type="match status" value="1"/>
</dbReference>
<dbReference type="Pfam" id="PF00648">
    <property type="entry name" value="Peptidase_C2"/>
    <property type="match status" value="1"/>
</dbReference>
<dbReference type="PRINTS" id="PR00704">
    <property type="entry name" value="CALPAIN"/>
</dbReference>
<dbReference type="SMART" id="SM00239">
    <property type="entry name" value="C2"/>
    <property type="match status" value="1"/>
</dbReference>
<dbReference type="SMART" id="SM00720">
    <property type="entry name" value="calpain_III"/>
    <property type="match status" value="1"/>
</dbReference>
<dbReference type="SMART" id="SM00230">
    <property type="entry name" value="CysPc"/>
    <property type="match status" value="1"/>
</dbReference>
<dbReference type="SUPFAM" id="SSF49562">
    <property type="entry name" value="C2 domain (Calcium/lipid-binding domain, CaLB)"/>
    <property type="match status" value="1"/>
</dbReference>
<dbReference type="SUPFAM" id="SSF49758">
    <property type="entry name" value="Calpain large subunit, middle domain (domain III)"/>
    <property type="match status" value="1"/>
</dbReference>
<dbReference type="SUPFAM" id="SSF54001">
    <property type="entry name" value="Cysteine proteinases"/>
    <property type="match status" value="1"/>
</dbReference>
<dbReference type="PROSITE" id="PS50004">
    <property type="entry name" value="C2"/>
    <property type="match status" value="1"/>
</dbReference>
<dbReference type="PROSITE" id="PS50203">
    <property type="entry name" value="CALPAIN_CAT"/>
    <property type="match status" value="1"/>
</dbReference>
<dbReference type="PROSITE" id="PS00139">
    <property type="entry name" value="THIOL_PROTEASE_CYS"/>
    <property type="match status" value="1"/>
</dbReference>
<evidence type="ECO:0000250" key="1"/>
<evidence type="ECO:0000255" key="2">
    <source>
        <dbReference type="PROSITE-ProRule" id="PRU00041"/>
    </source>
</evidence>
<evidence type="ECO:0000255" key="3">
    <source>
        <dbReference type="PROSITE-ProRule" id="PRU00239"/>
    </source>
</evidence>
<evidence type="ECO:0000305" key="4"/>
<organism>
    <name type="scientific">Rattus norvegicus</name>
    <name type="common">Rat</name>
    <dbReference type="NCBI Taxonomy" id="10116"/>
    <lineage>
        <taxon>Eukaryota</taxon>
        <taxon>Metazoa</taxon>
        <taxon>Chordata</taxon>
        <taxon>Craniata</taxon>
        <taxon>Vertebrata</taxon>
        <taxon>Euteleostomi</taxon>
        <taxon>Mammalia</taxon>
        <taxon>Eutheria</taxon>
        <taxon>Euarchontoglires</taxon>
        <taxon>Glires</taxon>
        <taxon>Rodentia</taxon>
        <taxon>Myomorpha</taxon>
        <taxon>Muroidea</taxon>
        <taxon>Muridae</taxon>
        <taxon>Murinae</taxon>
        <taxon>Rattus</taxon>
    </lineage>
</organism>
<gene>
    <name type="primary">Capn5</name>
</gene>
<accession>Q8R4C0</accession>
<sequence>MFSCTKAYEYQNYSALKRACLRRKVLFEDPHFPASDDSLYYKGTPGPTVRWKRPFDICDDPRLFVDGISSHDLHQGQVGNCWFVAACSSLASRESLWQKVIPDWKEQEWNPEKPDSYAGIFHFNFWRFGEWVDVVVDDRLPTVNNQLIYCHSNSKNEFWCAPVEKAYAKLAGCYQALDGGNTADALVDFTGGVSEPIDLTEGDLATDEAKRSQLFERVLKVHSRGGLISASIKAMTAADMETRLACGLVKGHAYAVTDVRKVRLGHGLLAFFKSEKLDMIRLRNPWGERVWTGPWSDTSEEWQKVSKSEREKMGVTVQDDGEFWMTYEDMCRYFTDIIKCRLINTSYLSIHKTWEEARLRGAWTRHEDPQQNRSGGCINHKDTFFQNPQYIFEVKKPEDEVLICIQQRPKRSTRREGKGENLAIGFDIYKVEENRQYRMHSLQHKAASSIYINSRSVFLRTELPEGRYVIIPTTFEPGHTGELLLRVFTDVPSNCRELRLDEPPRTCWSSLCGYPQQVTQVHVLGAAGLKDSSTGANSYVIIKCEGEKVRSAVQRGTSTPEYNVKGIFYRKKLSQPITVQVWNNRVLKDEFLGQVHLKTAPDDLQDLHSLHLQDRSGRQPSDLPGIVAVRVLCSASLTAV</sequence>
<keyword id="KW-0903">Direct protein sequencing</keyword>
<keyword id="KW-0378">Hydrolase</keyword>
<keyword id="KW-0645">Protease</keyword>
<keyword id="KW-1185">Reference proteome</keyword>
<keyword id="KW-0788">Thiol protease</keyword>
<protein>
    <recommendedName>
        <fullName>Calpain-5</fullName>
        <ecNumber>3.4.22.-</ecNumber>
    </recommendedName>
</protein>
<reference key="1">
    <citation type="submission" date="2002-02" db="EMBL/GenBank/DDBJ databases">
        <title>Cloning and normal expression profiling of rat calpain-5 by real-time PCR.</title>
        <authorList>
            <person name="Wang D.-S."/>
            <person name="McKinsey D."/>
            <person name="Pike B.R."/>
            <person name="DeFord M."/>
            <person name="Pineda J."/>
            <person name="Wang K.K.-W."/>
            <person name="Hayes R.L."/>
        </authorList>
    </citation>
    <scope>NUCLEOTIDE SEQUENCE [MRNA]</scope>
    <source>
        <strain>Sprague-Dawley</strain>
    </source>
</reference>
<reference key="2">
    <citation type="submission" date="2007-09" db="UniProtKB">
        <authorList>
            <person name="Lubec G."/>
            <person name="Kang S.U."/>
            <person name="Lubec S."/>
        </authorList>
    </citation>
    <scope>PROTEIN SEQUENCE OF 277-283; 446-455 AND 566-572</scope>
    <scope>IDENTIFICATION BY MASS SPECTROMETRY</scope>
    <source>
        <strain>Sprague-Dawley</strain>
        <tissue>Brain</tissue>
    </source>
</reference>